<proteinExistence type="inferred from homology"/>
<keyword id="KW-0030">Aminoacyl-tRNA synthetase</keyword>
<keyword id="KW-0067">ATP-binding</keyword>
<keyword id="KW-0963">Cytoplasm</keyword>
<keyword id="KW-0436">Ligase</keyword>
<keyword id="KW-0479">Metal-binding</keyword>
<keyword id="KW-0547">Nucleotide-binding</keyword>
<keyword id="KW-0648">Protein biosynthesis</keyword>
<keyword id="KW-0862">Zinc</keyword>
<organism>
    <name type="scientific">Borreliella afzelii (strain PKo)</name>
    <name type="common">Borrelia afzelii</name>
    <dbReference type="NCBI Taxonomy" id="390236"/>
    <lineage>
        <taxon>Bacteria</taxon>
        <taxon>Pseudomonadati</taxon>
        <taxon>Spirochaetota</taxon>
        <taxon>Spirochaetia</taxon>
        <taxon>Spirochaetales</taxon>
        <taxon>Borreliaceae</taxon>
        <taxon>Borreliella</taxon>
    </lineage>
</organism>
<accession>Q0SMQ8</accession>
<accession>G0IQF0</accession>
<name>SYC_BORAP</name>
<comment type="catalytic activity">
    <reaction evidence="1">
        <text>tRNA(Cys) + L-cysteine + ATP = L-cysteinyl-tRNA(Cys) + AMP + diphosphate</text>
        <dbReference type="Rhea" id="RHEA:17773"/>
        <dbReference type="Rhea" id="RHEA-COMP:9661"/>
        <dbReference type="Rhea" id="RHEA-COMP:9679"/>
        <dbReference type="ChEBI" id="CHEBI:30616"/>
        <dbReference type="ChEBI" id="CHEBI:33019"/>
        <dbReference type="ChEBI" id="CHEBI:35235"/>
        <dbReference type="ChEBI" id="CHEBI:78442"/>
        <dbReference type="ChEBI" id="CHEBI:78517"/>
        <dbReference type="ChEBI" id="CHEBI:456215"/>
        <dbReference type="EC" id="6.1.1.16"/>
    </reaction>
</comment>
<comment type="cofactor">
    <cofactor evidence="1">
        <name>Zn(2+)</name>
        <dbReference type="ChEBI" id="CHEBI:29105"/>
    </cofactor>
    <text evidence="1">Binds 1 zinc ion per subunit.</text>
</comment>
<comment type="subunit">
    <text evidence="1">Monomer.</text>
</comment>
<comment type="subcellular location">
    <subcellularLocation>
        <location evidence="1">Cytoplasm</location>
    </subcellularLocation>
</comment>
<comment type="similarity">
    <text evidence="1">Belongs to the class-I aminoacyl-tRNA synthetase family.</text>
</comment>
<feature type="chain" id="PRO_1000006563" description="Cysteine--tRNA ligase">
    <location>
        <begin position="1"/>
        <end position="480"/>
    </location>
</feature>
<feature type="short sequence motif" description="'HIGH' region">
    <location>
        <begin position="29"/>
        <end position="39"/>
    </location>
</feature>
<feature type="short sequence motif" description="'KMSKS' region">
    <location>
        <begin position="278"/>
        <end position="282"/>
    </location>
</feature>
<feature type="binding site" evidence="1">
    <location>
        <position position="27"/>
    </location>
    <ligand>
        <name>Zn(2+)</name>
        <dbReference type="ChEBI" id="CHEBI:29105"/>
    </ligand>
</feature>
<feature type="binding site" evidence="1">
    <location>
        <position position="221"/>
    </location>
    <ligand>
        <name>Zn(2+)</name>
        <dbReference type="ChEBI" id="CHEBI:29105"/>
    </ligand>
</feature>
<feature type="binding site" evidence="1">
    <location>
        <position position="246"/>
    </location>
    <ligand>
        <name>Zn(2+)</name>
        <dbReference type="ChEBI" id="CHEBI:29105"/>
    </ligand>
</feature>
<feature type="binding site" evidence="1">
    <location>
        <position position="250"/>
    </location>
    <ligand>
        <name>Zn(2+)</name>
        <dbReference type="ChEBI" id="CHEBI:29105"/>
    </ligand>
</feature>
<feature type="binding site" evidence="1">
    <location>
        <position position="281"/>
    </location>
    <ligand>
        <name>ATP</name>
        <dbReference type="ChEBI" id="CHEBI:30616"/>
    </ligand>
</feature>
<protein>
    <recommendedName>
        <fullName evidence="1">Cysteine--tRNA ligase</fullName>
        <ecNumber evidence="1">6.1.1.16</ecNumber>
    </recommendedName>
    <alternativeName>
        <fullName evidence="1">Cysteinyl-tRNA synthetase</fullName>
        <shortName evidence="1">CysRS</shortName>
    </alternativeName>
</protein>
<evidence type="ECO:0000255" key="1">
    <source>
        <dbReference type="HAMAP-Rule" id="MF_00041"/>
    </source>
</evidence>
<gene>
    <name evidence="1" type="primary">cysS</name>
    <name type="ordered locus">BAPKO_0631</name>
    <name type="ordered locus">BafPKo_0616</name>
</gene>
<dbReference type="EC" id="6.1.1.16" evidence="1"/>
<dbReference type="EMBL" id="CP000395">
    <property type="protein sequence ID" value="ABH01870.1"/>
    <property type="molecule type" value="Genomic_DNA"/>
</dbReference>
<dbReference type="EMBL" id="CP002933">
    <property type="protein sequence ID" value="AEL69820.1"/>
    <property type="molecule type" value="Genomic_DNA"/>
</dbReference>
<dbReference type="RefSeq" id="WP_011601116.1">
    <property type="nucleotide sequence ID" value="NZ_CP160066.1"/>
</dbReference>
<dbReference type="SMR" id="Q0SMQ8"/>
<dbReference type="STRING" id="29518.BLA32_01270"/>
<dbReference type="KEGG" id="baf:BAPKO_0631"/>
<dbReference type="KEGG" id="bafz:BafPKo_0616"/>
<dbReference type="PATRIC" id="fig|390236.22.peg.593"/>
<dbReference type="eggNOG" id="COG0215">
    <property type="taxonomic scope" value="Bacteria"/>
</dbReference>
<dbReference type="HOGENOM" id="CLU_013528_0_1_12"/>
<dbReference type="OrthoDB" id="9815130at2"/>
<dbReference type="Proteomes" id="UP000005216">
    <property type="component" value="Chromosome"/>
</dbReference>
<dbReference type="GO" id="GO:0005829">
    <property type="term" value="C:cytosol"/>
    <property type="evidence" value="ECO:0007669"/>
    <property type="project" value="TreeGrafter"/>
</dbReference>
<dbReference type="GO" id="GO:0005524">
    <property type="term" value="F:ATP binding"/>
    <property type="evidence" value="ECO:0007669"/>
    <property type="project" value="UniProtKB-UniRule"/>
</dbReference>
<dbReference type="GO" id="GO:0004817">
    <property type="term" value="F:cysteine-tRNA ligase activity"/>
    <property type="evidence" value="ECO:0007669"/>
    <property type="project" value="UniProtKB-UniRule"/>
</dbReference>
<dbReference type="GO" id="GO:0008270">
    <property type="term" value="F:zinc ion binding"/>
    <property type="evidence" value="ECO:0007669"/>
    <property type="project" value="UniProtKB-UniRule"/>
</dbReference>
<dbReference type="GO" id="GO:0006423">
    <property type="term" value="P:cysteinyl-tRNA aminoacylation"/>
    <property type="evidence" value="ECO:0007669"/>
    <property type="project" value="UniProtKB-UniRule"/>
</dbReference>
<dbReference type="CDD" id="cd00672">
    <property type="entry name" value="CysRS_core"/>
    <property type="match status" value="1"/>
</dbReference>
<dbReference type="Gene3D" id="1.20.120.1910">
    <property type="entry name" value="Cysteine-tRNA ligase, C-terminal anti-codon recognition domain"/>
    <property type="match status" value="1"/>
</dbReference>
<dbReference type="Gene3D" id="3.40.50.620">
    <property type="entry name" value="HUPs"/>
    <property type="match status" value="1"/>
</dbReference>
<dbReference type="HAMAP" id="MF_00041">
    <property type="entry name" value="Cys_tRNA_synth"/>
    <property type="match status" value="1"/>
</dbReference>
<dbReference type="InterPro" id="IPR015803">
    <property type="entry name" value="Cys-tRNA-ligase"/>
</dbReference>
<dbReference type="InterPro" id="IPR024909">
    <property type="entry name" value="Cys-tRNA/MSH_ligase"/>
</dbReference>
<dbReference type="InterPro" id="IPR014729">
    <property type="entry name" value="Rossmann-like_a/b/a_fold"/>
</dbReference>
<dbReference type="InterPro" id="IPR032678">
    <property type="entry name" value="tRNA-synt_1_cat_dom"/>
</dbReference>
<dbReference type="InterPro" id="IPR009080">
    <property type="entry name" value="tRNAsynth_Ia_anticodon-bd"/>
</dbReference>
<dbReference type="NCBIfam" id="TIGR00435">
    <property type="entry name" value="cysS"/>
    <property type="match status" value="1"/>
</dbReference>
<dbReference type="NCBIfam" id="NF011107">
    <property type="entry name" value="PRK14534.1"/>
    <property type="match status" value="1"/>
</dbReference>
<dbReference type="PANTHER" id="PTHR10890:SF3">
    <property type="entry name" value="CYSTEINE--TRNA LIGASE, CYTOPLASMIC"/>
    <property type="match status" value="1"/>
</dbReference>
<dbReference type="PANTHER" id="PTHR10890">
    <property type="entry name" value="CYSTEINYL-TRNA SYNTHETASE"/>
    <property type="match status" value="1"/>
</dbReference>
<dbReference type="Pfam" id="PF01406">
    <property type="entry name" value="tRNA-synt_1e"/>
    <property type="match status" value="1"/>
</dbReference>
<dbReference type="PRINTS" id="PR00983">
    <property type="entry name" value="TRNASYNTHCYS"/>
</dbReference>
<dbReference type="SUPFAM" id="SSF47323">
    <property type="entry name" value="Anticodon-binding domain of a subclass of class I aminoacyl-tRNA synthetases"/>
    <property type="match status" value="1"/>
</dbReference>
<dbReference type="SUPFAM" id="SSF52374">
    <property type="entry name" value="Nucleotidylyl transferase"/>
    <property type="match status" value="1"/>
</dbReference>
<sequence>MILKLHNTRTKDFSELTNFDNVKVYACGPTVYNYAHIGNFRTYIFGDLLIKTLRFLGYKVNYAMNITDIGHLTGDLDDGEDKVVKTAREKGLTVQEISEFFTEAFFKDCRKLNVVYPDKVLIASKHIPIMIEVVKILEEKKITYFSNGNVYFDTSCFKSYGEMAGIDLIDKDMTFSRVDIDKFKRNKTDFVLWFTNSKFKDQEMKWDSPWGFGYPSWHLECAAMNLEYFKDTLDIHLGGVDHIGVHHINEIAIVECFLNKKWCDIFVHGEFLIMDYNKMSKSRGNFITVKDLEEQNFSPLDFRYLCLTSHYRNQLKFSLNNLQASKIARENMINRLSYFYASLDPVALGVLNKDLKNFGFSEEKEYYDSFIEKVSFDLNISQGLALLWEIIKSENLSFVSKLRLAFIFDEIMSLNLREEILKNLENHDVVVDENMKTLIEERRIAKCEKNFKRADEIRDFFAKKGFVLVDTKEGTKVKRG</sequence>
<reference key="1">
    <citation type="journal article" date="2006" name="BMC Genomics">
        <title>Comparative genome analysis: selection pressure on the Borrelia vls cassettes is essential for infectivity.</title>
        <authorList>
            <person name="Gloeckner G."/>
            <person name="Schulte-Spechtel U."/>
            <person name="Schilhabel M."/>
            <person name="Felder M."/>
            <person name="Suehnel J."/>
            <person name="Wilske B."/>
            <person name="Platzer M."/>
        </authorList>
    </citation>
    <scope>NUCLEOTIDE SEQUENCE [LARGE SCALE GENOMIC DNA]</scope>
    <source>
        <strain>PKo</strain>
    </source>
</reference>
<reference key="2">
    <citation type="journal article" date="2011" name="J. Bacteriol.">
        <title>Whole-genome sequences of two Borrelia afzelii and two Borrelia garinii Lyme disease agent isolates.</title>
        <authorList>
            <person name="Casjens S.R."/>
            <person name="Mongodin E.F."/>
            <person name="Qiu W.G."/>
            <person name="Dunn J.J."/>
            <person name="Luft B.J."/>
            <person name="Fraser-Liggett C.M."/>
            <person name="Schutzer S.E."/>
        </authorList>
    </citation>
    <scope>NUCLEOTIDE SEQUENCE [LARGE SCALE GENOMIC DNA]</scope>
    <source>
        <strain>PKo</strain>
    </source>
</reference>